<feature type="chain" id="PRO_1000058943" description="Adenylate kinase">
    <location>
        <begin position="1"/>
        <end position="214"/>
    </location>
</feature>
<feature type="region of interest" description="NMP" evidence="1">
    <location>
        <begin position="30"/>
        <end position="59"/>
    </location>
</feature>
<feature type="region of interest" description="LID">
    <location>
        <begin position="122"/>
        <end position="159"/>
    </location>
</feature>
<feature type="binding site" evidence="1">
    <location>
        <begin position="10"/>
        <end position="15"/>
    </location>
    <ligand>
        <name>ATP</name>
        <dbReference type="ChEBI" id="CHEBI:30616"/>
    </ligand>
</feature>
<feature type="binding site" evidence="1">
    <location>
        <position position="31"/>
    </location>
    <ligand>
        <name>AMP</name>
        <dbReference type="ChEBI" id="CHEBI:456215"/>
    </ligand>
</feature>
<feature type="binding site" evidence="1">
    <location>
        <position position="36"/>
    </location>
    <ligand>
        <name>AMP</name>
        <dbReference type="ChEBI" id="CHEBI:456215"/>
    </ligand>
</feature>
<feature type="binding site" evidence="1">
    <location>
        <begin position="57"/>
        <end position="59"/>
    </location>
    <ligand>
        <name>AMP</name>
        <dbReference type="ChEBI" id="CHEBI:456215"/>
    </ligand>
</feature>
<feature type="binding site" evidence="1">
    <location>
        <begin position="85"/>
        <end position="88"/>
    </location>
    <ligand>
        <name>AMP</name>
        <dbReference type="ChEBI" id="CHEBI:456215"/>
    </ligand>
</feature>
<feature type="binding site" evidence="1">
    <location>
        <position position="92"/>
    </location>
    <ligand>
        <name>AMP</name>
        <dbReference type="ChEBI" id="CHEBI:456215"/>
    </ligand>
</feature>
<feature type="binding site" evidence="1">
    <location>
        <position position="123"/>
    </location>
    <ligand>
        <name>ATP</name>
        <dbReference type="ChEBI" id="CHEBI:30616"/>
    </ligand>
</feature>
<feature type="binding site" evidence="1">
    <location>
        <begin position="132"/>
        <end position="133"/>
    </location>
    <ligand>
        <name>ATP</name>
        <dbReference type="ChEBI" id="CHEBI:30616"/>
    </ligand>
</feature>
<feature type="binding site" evidence="1">
    <location>
        <position position="156"/>
    </location>
    <ligand>
        <name>AMP</name>
        <dbReference type="ChEBI" id="CHEBI:456215"/>
    </ligand>
</feature>
<feature type="binding site" evidence="1">
    <location>
        <position position="167"/>
    </location>
    <ligand>
        <name>AMP</name>
        <dbReference type="ChEBI" id="CHEBI:456215"/>
    </ligand>
</feature>
<feature type="binding site" evidence="1">
    <location>
        <position position="200"/>
    </location>
    <ligand>
        <name>ATP</name>
        <dbReference type="ChEBI" id="CHEBI:30616"/>
    </ligand>
</feature>
<comment type="function">
    <text evidence="1">Catalyzes the reversible transfer of the terminal phosphate group between ATP and AMP. Plays an important role in cellular energy homeostasis and in adenine nucleotide metabolism.</text>
</comment>
<comment type="catalytic activity">
    <reaction evidence="1">
        <text>AMP + ATP = 2 ADP</text>
        <dbReference type="Rhea" id="RHEA:12973"/>
        <dbReference type="ChEBI" id="CHEBI:30616"/>
        <dbReference type="ChEBI" id="CHEBI:456215"/>
        <dbReference type="ChEBI" id="CHEBI:456216"/>
        <dbReference type="EC" id="2.7.4.3"/>
    </reaction>
</comment>
<comment type="pathway">
    <text evidence="1">Purine metabolism; AMP biosynthesis via salvage pathway; AMP from ADP: step 1/1.</text>
</comment>
<comment type="subunit">
    <text evidence="1">Monomer.</text>
</comment>
<comment type="subcellular location">
    <subcellularLocation>
        <location evidence="1">Cytoplasm</location>
    </subcellularLocation>
</comment>
<comment type="domain">
    <text evidence="1">Consists of three domains, a large central CORE domain and two small peripheral domains, NMPbind and LID, which undergo movements during catalysis. The LID domain closes over the site of phosphoryl transfer upon ATP binding. Assembling and dissambling the active center during each catalytic cycle provides an effective means to prevent ATP hydrolysis.</text>
</comment>
<comment type="similarity">
    <text evidence="1">Belongs to the adenylate kinase family.</text>
</comment>
<organism>
    <name type="scientific">Yersinia pestis bv. Antiqua (strain Nepal516)</name>
    <dbReference type="NCBI Taxonomy" id="377628"/>
    <lineage>
        <taxon>Bacteria</taxon>
        <taxon>Pseudomonadati</taxon>
        <taxon>Pseudomonadota</taxon>
        <taxon>Gammaproteobacteria</taxon>
        <taxon>Enterobacterales</taxon>
        <taxon>Yersiniaceae</taxon>
        <taxon>Yersinia</taxon>
    </lineage>
</organism>
<reference key="1">
    <citation type="journal article" date="2006" name="J. Bacteriol.">
        <title>Complete genome sequence of Yersinia pestis strains Antiqua and Nepal516: evidence of gene reduction in an emerging pathogen.</title>
        <authorList>
            <person name="Chain P.S.G."/>
            <person name="Hu P."/>
            <person name="Malfatti S.A."/>
            <person name="Radnedge L."/>
            <person name="Larimer F."/>
            <person name="Vergez L.M."/>
            <person name="Worsham P."/>
            <person name="Chu M.C."/>
            <person name="Andersen G.L."/>
        </authorList>
    </citation>
    <scope>NUCLEOTIDE SEQUENCE [LARGE SCALE GENOMIC DNA]</scope>
    <source>
        <strain>Nepal516</strain>
    </source>
</reference>
<reference key="2">
    <citation type="submission" date="2009-04" db="EMBL/GenBank/DDBJ databases">
        <title>Yersinia pestis Nepal516A whole genome shotgun sequencing project.</title>
        <authorList>
            <person name="Plunkett G. III"/>
            <person name="Anderson B.D."/>
            <person name="Baumler D.J."/>
            <person name="Burland V."/>
            <person name="Cabot E.L."/>
            <person name="Glasner J.D."/>
            <person name="Mau B."/>
            <person name="Neeno-Eckwall E."/>
            <person name="Perna N.T."/>
            <person name="Munk A.C."/>
            <person name="Tapia R."/>
            <person name="Green L.D."/>
            <person name="Rogers Y.C."/>
            <person name="Detter J.C."/>
            <person name="Bruce D.C."/>
            <person name="Brettin T.S."/>
        </authorList>
    </citation>
    <scope>NUCLEOTIDE SEQUENCE [LARGE SCALE GENOMIC DNA]</scope>
    <source>
        <strain>Nepal516</strain>
    </source>
</reference>
<keyword id="KW-0067">ATP-binding</keyword>
<keyword id="KW-0963">Cytoplasm</keyword>
<keyword id="KW-0418">Kinase</keyword>
<keyword id="KW-0545">Nucleotide biosynthesis</keyword>
<keyword id="KW-0547">Nucleotide-binding</keyword>
<keyword id="KW-0808">Transferase</keyword>
<evidence type="ECO:0000255" key="1">
    <source>
        <dbReference type="HAMAP-Rule" id="MF_00235"/>
    </source>
</evidence>
<name>KAD_YERPN</name>
<proteinExistence type="inferred from homology"/>
<accession>Q1CL27</accession>
<accession>C4GQQ0</accession>
<dbReference type="EC" id="2.7.4.3" evidence="1"/>
<dbReference type="EMBL" id="CP000305">
    <property type="protein sequence ID" value="ABG17303.1"/>
    <property type="molecule type" value="Genomic_DNA"/>
</dbReference>
<dbReference type="EMBL" id="ACNQ01000008">
    <property type="protein sequence ID" value="EEO77391.1"/>
    <property type="molecule type" value="Genomic_DNA"/>
</dbReference>
<dbReference type="RefSeq" id="WP_002208600.1">
    <property type="nucleotide sequence ID" value="NZ_ACNQ01000008.1"/>
</dbReference>
<dbReference type="SMR" id="Q1CL27"/>
<dbReference type="GeneID" id="57975593"/>
<dbReference type="KEGG" id="ypn:YPN_0971"/>
<dbReference type="HOGENOM" id="CLU_032354_1_2_6"/>
<dbReference type="UniPathway" id="UPA00588">
    <property type="reaction ID" value="UER00649"/>
</dbReference>
<dbReference type="Proteomes" id="UP000008936">
    <property type="component" value="Chromosome"/>
</dbReference>
<dbReference type="GO" id="GO:0005737">
    <property type="term" value="C:cytoplasm"/>
    <property type="evidence" value="ECO:0007669"/>
    <property type="project" value="UniProtKB-SubCell"/>
</dbReference>
<dbReference type="GO" id="GO:0004017">
    <property type="term" value="F:adenylate kinase activity"/>
    <property type="evidence" value="ECO:0007669"/>
    <property type="project" value="UniProtKB-UniRule"/>
</dbReference>
<dbReference type="GO" id="GO:0005524">
    <property type="term" value="F:ATP binding"/>
    <property type="evidence" value="ECO:0007669"/>
    <property type="project" value="UniProtKB-UniRule"/>
</dbReference>
<dbReference type="GO" id="GO:0044209">
    <property type="term" value="P:AMP salvage"/>
    <property type="evidence" value="ECO:0007669"/>
    <property type="project" value="UniProtKB-UniRule"/>
</dbReference>
<dbReference type="CDD" id="cd01428">
    <property type="entry name" value="ADK"/>
    <property type="match status" value="1"/>
</dbReference>
<dbReference type="FunFam" id="3.40.50.300:FF:000106">
    <property type="entry name" value="Adenylate kinase mitochondrial"/>
    <property type="match status" value="1"/>
</dbReference>
<dbReference type="Gene3D" id="3.40.50.300">
    <property type="entry name" value="P-loop containing nucleotide triphosphate hydrolases"/>
    <property type="match status" value="1"/>
</dbReference>
<dbReference type="HAMAP" id="MF_00235">
    <property type="entry name" value="Adenylate_kinase_Adk"/>
    <property type="match status" value="1"/>
</dbReference>
<dbReference type="InterPro" id="IPR006259">
    <property type="entry name" value="Adenyl_kin_sub"/>
</dbReference>
<dbReference type="InterPro" id="IPR000850">
    <property type="entry name" value="Adenylat/UMP-CMP_kin"/>
</dbReference>
<dbReference type="InterPro" id="IPR033690">
    <property type="entry name" value="Adenylat_kinase_CS"/>
</dbReference>
<dbReference type="InterPro" id="IPR007862">
    <property type="entry name" value="Adenylate_kinase_lid-dom"/>
</dbReference>
<dbReference type="InterPro" id="IPR027417">
    <property type="entry name" value="P-loop_NTPase"/>
</dbReference>
<dbReference type="NCBIfam" id="TIGR01351">
    <property type="entry name" value="adk"/>
    <property type="match status" value="1"/>
</dbReference>
<dbReference type="NCBIfam" id="NF001379">
    <property type="entry name" value="PRK00279.1-1"/>
    <property type="match status" value="1"/>
</dbReference>
<dbReference type="NCBIfam" id="NF001380">
    <property type="entry name" value="PRK00279.1-2"/>
    <property type="match status" value="1"/>
</dbReference>
<dbReference type="NCBIfam" id="NF001381">
    <property type="entry name" value="PRK00279.1-3"/>
    <property type="match status" value="1"/>
</dbReference>
<dbReference type="NCBIfam" id="NF011100">
    <property type="entry name" value="PRK14527.1"/>
    <property type="match status" value="1"/>
</dbReference>
<dbReference type="PANTHER" id="PTHR23359">
    <property type="entry name" value="NUCLEOTIDE KINASE"/>
    <property type="match status" value="1"/>
</dbReference>
<dbReference type="Pfam" id="PF00406">
    <property type="entry name" value="ADK"/>
    <property type="match status" value="1"/>
</dbReference>
<dbReference type="Pfam" id="PF05191">
    <property type="entry name" value="ADK_lid"/>
    <property type="match status" value="1"/>
</dbReference>
<dbReference type="PRINTS" id="PR00094">
    <property type="entry name" value="ADENYLTKNASE"/>
</dbReference>
<dbReference type="SUPFAM" id="SSF52540">
    <property type="entry name" value="P-loop containing nucleoside triphosphate hydrolases"/>
    <property type="match status" value="1"/>
</dbReference>
<dbReference type="PROSITE" id="PS00113">
    <property type="entry name" value="ADENYLATE_KINASE"/>
    <property type="match status" value="1"/>
</dbReference>
<gene>
    <name evidence="1" type="primary">adk</name>
    <name type="ordered locus">YPN_0971</name>
    <name type="ORF">YP516_1053</name>
</gene>
<protein>
    <recommendedName>
        <fullName evidence="1">Adenylate kinase</fullName>
        <shortName evidence="1">AK</shortName>
        <ecNumber evidence="1">2.7.4.3</ecNumber>
    </recommendedName>
    <alternativeName>
        <fullName evidence="1">ATP-AMP transphosphorylase</fullName>
    </alternativeName>
    <alternativeName>
        <fullName evidence="1">ATP:AMP phosphotransferase</fullName>
    </alternativeName>
    <alternativeName>
        <fullName evidence="1">Adenylate monophosphate kinase</fullName>
    </alternativeName>
</protein>
<sequence>MRIILLGAPGAGKGTQAQFIMEKYGIPQISTGDMLRAAVKAGSELGLKAKEIMDAGKLVTDELVIALVKERITQEDCRDGFLLDGFPRTIPQADAMKEAGIKVDYVLEFDVPDELIVERIVGRRVHAASGRVYHVKFNPPKVEDKDDVTGEELTIRKDDQEATVRKRLIEYHQQTAPLVSYYHKEADAGNTQYFKLDGTRNVAEVSAELATILG</sequence>